<dbReference type="EC" id="1.13.12.-"/>
<dbReference type="EMBL" id="AL123456">
    <property type="protein sequence ID" value="CCP44297.1"/>
    <property type="molecule type" value="Genomic_DNA"/>
</dbReference>
<dbReference type="PIR" id="B70500">
    <property type="entry name" value="B70500"/>
</dbReference>
<dbReference type="RefSeq" id="NP_216049.1">
    <property type="nucleotide sequence ID" value="NC_000962.3"/>
</dbReference>
<dbReference type="RefSeq" id="WP_003898921.1">
    <property type="nucleotide sequence ID" value="NZ_NVQJ01000004.1"/>
</dbReference>
<dbReference type="SMR" id="O06179"/>
<dbReference type="STRING" id="83332.Rv1533"/>
<dbReference type="PaxDb" id="83332-Rv1533"/>
<dbReference type="DNASU" id="886424"/>
<dbReference type="GeneID" id="886424"/>
<dbReference type="KEGG" id="mtu:Rv1533"/>
<dbReference type="KEGG" id="mtv:RVBD_1533"/>
<dbReference type="TubercuList" id="Rv1533"/>
<dbReference type="eggNOG" id="COG2070">
    <property type="taxonomic scope" value="Bacteria"/>
</dbReference>
<dbReference type="InParanoid" id="O06179"/>
<dbReference type="OrthoDB" id="7165168at2"/>
<dbReference type="PhylomeDB" id="O06179"/>
<dbReference type="Proteomes" id="UP000001584">
    <property type="component" value="Chromosome"/>
</dbReference>
<dbReference type="GO" id="GO:0018580">
    <property type="term" value="F:nitronate monooxygenase activity"/>
    <property type="evidence" value="ECO:0007669"/>
    <property type="project" value="InterPro"/>
</dbReference>
<dbReference type="CDD" id="cd04730">
    <property type="entry name" value="NPD_like"/>
    <property type="match status" value="1"/>
</dbReference>
<dbReference type="FunFam" id="3.20.20.70:FF:000189">
    <property type="entry name" value="Nitronate monooxygenase"/>
    <property type="match status" value="1"/>
</dbReference>
<dbReference type="Gene3D" id="3.20.20.70">
    <property type="entry name" value="Aldolase class I"/>
    <property type="match status" value="1"/>
</dbReference>
<dbReference type="InterPro" id="IPR013785">
    <property type="entry name" value="Aldolase_TIM"/>
</dbReference>
<dbReference type="InterPro" id="IPR004136">
    <property type="entry name" value="NMO"/>
</dbReference>
<dbReference type="PANTHER" id="PTHR32332">
    <property type="entry name" value="2-NITROPROPANE DIOXYGENASE"/>
    <property type="match status" value="1"/>
</dbReference>
<dbReference type="PANTHER" id="PTHR32332:SF38">
    <property type="entry name" value="MONOOXYGENASE RV1533-RELATED"/>
    <property type="match status" value="1"/>
</dbReference>
<dbReference type="Pfam" id="PF03060">
    <property type="entry name" value="NMO"/>
    <property type="match status" value="1"/>
</dbReference>
<dbReference type="SUPFAM" id="SSF51412">
    <property type="entry name" value="Inosine monophosphate dehydrogenase (IMPDH)"/>
    <property type="match status" value="1"/>
</dbReference>
<evidence type="ECO:0000250" key="1">
    <source>
        <dbReference type="UniProtKB" id="Q9HWH9"/>
    </source>
</evidence>
<evidence type="ECO:0000305" key="2"/>
<reference key="1">
    <citation type="journal article" date="1998" name="Nature">
        <title>Deciphering the biology of Mycobacterium tuberculosis from the complete genome sequence.</title>
        <authorList>
            <person name="Cole S.T."/>
            <person name="Brosch R."/>
            <person name="Parkhill J."/>
            <person name="Garnier T."/>
            <person name="Churcher C.M."/>
            <person name="Harris D.E."/>
            <person name="Gordon S.V."/>
            <person name="Eiglmeier K."/>
            <person name="Gas S."/>
            <person name="Barry C.E. III"/>
            <person name="Tekaia F."/>
            <person name="Badcock K."/>
            <person name="Basham D."/>
            <person name="Brown D."/>
            <person name="Chillingworth T."/>
            <person name="Connor R."/>
            <person name="Davies R.M."/>
            <person name="Devlin K."/>
            <person name="Feltwell T."/>
            <person name="Gentles S."/>
            <person name="Hamlin N."/>
            <person name="Holroyd S."/>
            <person name="Hornsby T."/>
            <person name="Jagels K."/>
            <person name="Krogh A."/>
            <person name="McLean J."/>
            <person name="Moule S."/>
            <person name="Murphy L.D."/>
            <person name="Oliver S."/>
            <person name="Osborne J."/>
            <person name="Quail M.A."/>
            <person name="Rajandream M.A."/>
            <person name="Rogers J."/>
            <person name="Rutter S."/>
            <person name="Seeger K."/>
            <person name="Skelton S."/>
            <person name="Squares S."/>
            <person name="Squares R."/>
            <person name="Sulston J.E."/>
            <person name="Taylor K."/>
            <person name="Whitehead S."/>
            <person name="Barrell B.G."/>
        </authorList>
    </citation>
    <scope>NUCLEOTIDE SEQUENCE [LARGE SCALE GENOMIC DNA]</scope>
    <source>
        <strain>ATCC 25618 / H37Rv</strain>
    </source>
</reference>
<reference key="2">
    <citation type="journal article" date="2011" name="Mol. Cell. Proteomics">
        <title>Proteogenomic analysis of Mycobacterium tuberculosis by high resolution mass spectrometry.</title>
        <authorList>
            <person name="Kelkar D.S."/>
            <person name="Kumar D."/>
            <person name="Kumar P."/>
            <person name="Balakrishnan L."/>
            <person name="Muthusamy B."/>
            <person name="Yadav A.K."/>
            <person name="Shrivastava P."/>
            <person name="Marimuthu A."/>
            <person name="Anand S."/>
            <person name="Sundaram H."/>
            <person name="Kingsbury R."/>
            <person name="Harsha H.C."/>
            <person name="Nair B."/>
            <person name="Prasad T.S."/>
            <person name="Chauhan D.S."/>
            <person name="Katoch K."/>
            <person name="Katoch V.M."/>
            <person name="Kumar P."/>
            <person name="Chaerkady R."/>
            <person name="Ramachandran S."/>
            <person name="Dash D."/>
            <person name="Pandey A."/>
        </authorList>
    </citation>
    <scope>IDENTIFICATION BY MASS SPECTROMETRY [LARGE SCALE ANALYSIS]</scope>
    <source>
        <strain>ATCC 25618 / H37Rv</strain>
    </source>
</reference>
<sequence length="375" mass="39620">MRTRVAELLGAEFPICAFSHCRDVVAAVSNAGGFGILGAVAHSPKRLESELTWIEEHTGGKPYGVDVLLPPKYIGAEQGGIDAQQARELIPEGHRTFVDDLLVRYGIPAVTDRQRSSSAGGLHISPKGYQPLLDVAFAHDIRLIASALGPPPPDLVERAHNHDVLVAALAGTAQHARRHAAAGVDLIVAQGTEAGGHTGEVATMVLVPEVVDAVSPTPVLAAGGIARGRQIAAALALGAEGVWCGSVWLTTEEAETPPVVKDKFLAATSSDTVRSRSLTGKPARMLRTAWTDEWDRPDSPDPLGMPLQSALVSDPQLRINQAAGQPGAKARELATYFVGQVVGSLDRVRSARSVVLDMVEEFIDTVGQLQGLVQR</sequence>
<comment type="cofactor">
    <cofactor evidence="1">
        <name>FMN</name>
        <dbReference type="ChEBI" id="CHEBI:58210"/>
    </cofactor>
    <text evidence="1">Binds 1 FMN per subunit.</text>
</comment>
<comment type="similarity">
    <text evidence="2">Belongs to the nitronate monooxygenase family.</text>
</comment>
<proteinExistence type="evidence at protein level"/>
<accession>O06179</accession>
<accession>L0T746</accession>
<protein>
    <recommendedName>
        <fullName>Putative monooxygenase Rv1533</fullName>
        <ecNumber>1.13.12.-</ecNumber>
    </recommendedName>
</protein>
<keyword id="KW-0285">Flavoprotein</keyword>
<keyword id="KW-0288">FMN</keyword>
<keyword id="KW-0503">Monooxygenase</keyword>
<keyword id="KW-0560">Oxidoreductase</keyword>
<keyword id="KW-1185">Reference proteome</keyword>
<gene>
    <name type="ordered locus">Rv1533</name>
</gene>
<organism>
    <name type="scientific">Mycobacterium tuberculosis (strain ATCC 25618 / H37Rv)</name>
    <dbReference type="NCBI Taxonomy" id="83332"/>
    <lineage>
        <taxon>Bacteria</taxon>
        <taxon>Bacillati</taxon>
        <taxon>Actinomycetota</taxon>
        <taxon>Actinomycetes</taxon>
        <taxon>Mycobacteriales</taxon>
        <taxon>Mycobacteriaceae</taxon>
        <taxon>Mycobacterium</taxon>
        <taxon>Mycobacterium tuberculosis complex</taxon>
    </lineage>
</organism>
<name>Y1533_MYCTU</name>
<feature type="chain" id="PRO_0000393572" description="Putative monooxygenase Rv1533">
    <location>
        <begin position="1"/>
        <end position="375"/>
    </location>
</feature>
<feature type="binding site" evidence="1">
    <location>
        <position position="190"/>
    </location>
    <ligand>
        <name>FMN</name>
        <dbReference type="ChEBI" id="CHEBI:58210"/>
    </ligand>
</feature>
<feature type="binding site" evidence="1">
    <location>
        <position position="195"/>
    </location>
    <ligand>
        <name>FMN</name>
        <dbReference type="ChEBI" id="CHEBI:58210"/>
    </ligand>
</feature>
<feature type="binding site" evidence="1">
    <location>
        <position position="224"/>
    </location>
    <ligand>
        <name>FMN</name>
        <dbReference type="ChEBI" id="CHEBI:58210"/>
    </ligand>
</feature>
<feature type="binding site" evidence="1">
    <location>
        <begin position="243"/>
        <end position="246"/>
    </location>
    <ligand>
        <name>FMN</name>
        <dbReference type="ChEBI" id="CHEBI:58210"/>
    </ligand>
</feature>